<proteinExistence type="inferred from homology"/>
<reference key="1">
    <citation type="journal article" date="1997" name="Microbiology">
        <title>A 23911 bp region of the Bacillus subtilis genome comprising genes located upstream and downstream of the lev operon.</title>
        <authorList>
            <person name="Parro V."/>
            <person name="San Roman M."/>
            <person name="Galindo I."/>
            <person name="Purnelle B."/>
            <person name="Bolotin A."/>
            <person name="Sorokin A."/>
            <person name="Mellado R.P."/>
        </authorList>
    </citation>
    <scope>NUCLEOTIDE SEQUENCE [GENOMIC DNA]</scope>
    <source>
        <strain>168</strain>
    </source>
</reference>
<reference key="2">
    <citation type="journal article" date="1997" name="Microbiology">
        <title>Sequence of the Bacillus subtilis genome region in the vicinity of the lev operon reveals two new extracytoplasmic function RNA polymerase sigma factors SigV and SigZ.</title>
        <authorList>
            <person name="Sorokin A."/>
            <person name="Bolotin A."/>
            <person name="Purnelle B."/>
            <person name="Hilbert H."/>
            <person name="Lauber J."/>
            <person name="Duesterhoeft A."/>
            <person name="Ehrlich S.D."/>
        </authorList>
    </citation>
    <scope>NUCLEOTIDE SEQUENCE [GENOMIC DNA]</scope>
    <source>
        <strain>168</strain>
    </source>
</reference>
<reference key="3">
    <citation type="journal article" date="1997" name="Nature">
        <title>The complete genome sequence of the Gram-positive bacterium Bacillus subtilis.</title>
        <authorList>
            <person name="Kunst F."/>
            <person name="Ogasawara N."/>
            <person name="Moszer I."/>
            <person name="Albertini A.M."/>
            <person name="Alloni G."/>
            <person name="Azevedo V."/>
            <person name="Bertero M.G."/>
            <person name="Bessieres P."/>
            <person name="Bolotin A."/>
            <person name="Borchert S."/>
            <person name="Borriss R."/>
            <person name="Boursier L."/>
            <person name="Brans A."/>
            <person name="Braun M."/>
            <person name="Brignell S.C."/>
            <person name="Bron S."/>
            <person name="Brouillet S."/>
            <person name="Bruschi C.V."/>
            <person name="Caldwell B."/>
            <person name="Capuano V."/>
            <person name="Carter N.M."/>
            <person name="Choi S.-K."/>
            <person name="Codani J.-J."/>
            <person name="Connerton I.F."/>
            <person name="Cummings N.J."/>
            <person name="Daniel R.A."/>
            <person name="Denizot F."/>
            <person name="Devine K.M."/>
            <person name="Duesterhoeft A."/>
            <person name="Ehrlich S.D."/>
            <person name="Emmerson P.T."/>
            <person name="Entian K.-D."/>
            <person name="Errington J."/>
            <person name="Fabret C."/>
            <person name="Ferrari E."/>
            <person name="Foulger D."/>
            <person name="Fritz C."/>
            <person name="Fujita M."/>
            <person name="Fujita Y."/>
            <person name="Fuma S."/>
            <person name="Galizzi A."/>
            <person name="Galleron N."/>
            <person name="Ghim S.-Y."/>
            <person name="Glaser P."/>
            <person name="Goffeau A."/>
            <person name="Golightly E.J."/>
            <person name="Grandi G."/>
            <person name="Guiseppi G."/>
            <person name="Guy B.J."/>
            <person name="Haga K."/>
            <person name="Haiech J."/>
            <person name="Harwood C.R."/>
            <person name="Henaut A."/>
            <person name="Hilbert H."/>
            <person name="Holsappel S."/>
            <person name="Hosono S."/>
            <person name="Hullo M.-F."/>
            <person name="Itaya M."/>
            <person name="Jones L.-M."/>
            <person name="Joris B."/>
            <person name="Karamata D."/>
            <person name="Kasahara Y."/>
            <person name="Klaerr-Blanchard M."/>
            <person name="Klein C."/>
            <person name="Kobayashi Y."/>
            <person name="Koetter P."/>
            <person name="Koningstein G."/>
            <person name="Krogh S."/>
            <person name="Kumano M."/>
            <person name="Kurita K."/>
            <person name="Lapidus A."/>
            <person name="Lardinois S."/>
            <person name="Lauber J."/>
            <person name="Lazarevic V."/>
            <person name="Lee S.-M."/>
            <person name="Levine A."/>
            <person name="Liu H."/>
            <person name="Masuda S."/>
            <person name="Mauel C."/>
            <person name="Medigue C."/>
            <person name="Medina N."/>
            <person name="Mellado R.P."/>
            <person name="Mizuno M."/>
            <person name="Moestl D."/>
            <person name="Nakai S."/>
            <person name="Noback M."/>
            <person name="Noone D."/>
            <person name="O'Reilly M."/>
            <person name="Ogawa K."/>
            <person name="Ogiwara A."/>
            <person name="Oudega B."/>
            <person name="Park S.-H."/>
            <person name="Parro V."/>
            <person name="Pohl T.M."/>
            <person name="Portetelle D."/>
            <person name="Porwollik S."/>
            <person name="Prescott A.M."/>
            <person name="Presecan E."/>
            <person name="Pujic P."/>
            <person name="Purnelle B."/>
            <person name="Rapoport G."/>
            <person name="Rey M."/>
            <person name="Reynolds S."/>
            <person name="Rieger M."/>
            <person name="Rivolta C."/>
            <person name="Rocha E."/>
            <person name="Roche B."/>
            <person name="Rose M."/>
            <person name="Sadaie Y."/>
            <person name="Sato T."/>
            <person name="Scanlan E."/>
            <person name="Schleich S."/>
            <person name="Schroeter R."/>
            <person name="Scoffone F."/>
            <person name="Sekiguchi J."/>
            <person name="Sekowska A."/>
            <person name="Seror S.J."/>
            <person name="Serror P."/>
            <person name="Shin B.-S."/>
            <person name="Soldo B."/>
            <person name="Sorokin A."/>
            <person name="Tacconi E."/>
            <person name="Takagi T."/>
            <person name="Takahashi H."/>
            <person name="Takemaru K."/>
            <person name="Takeuchi M."/>
            <person name="Tamakoshi A."/>
            <person name="Tanaka T."/>
            <person name="Terpstra P."/>
            <person name="Tognoni A."/>
            <person name="Tosato V."/>
            <person name="Uchiyama S."/>
            <person name="Vandenbol M."/>
            <person name="Vannier F."/>
            <person name="Vassarotti A."/>
            <person name="Viari A."/>
            <person name="Wambutt R."/>
            <person name="Wedler E."/>
            <person name="Wedler H."/>
            <person name="Weitzenegger T."/>
            <person name="Winters P."/>
            <person name="Wipat A."/>
            <person name="Yamamoto H."/>
            <person name="Yamane K."/>
            <person name="Yasumoto K."/>
            <person name="Yata K."/>
            <person name="Yoshida K."/>
            <person name="Yoshikawa H.-F."/>
            <person name="Zumstein E."/>
            <person name="Yoshikawa H."/>
            <person name="Danchin A."/>
        </authorList>
    </citation>
    <scope>NUCLEOTIDE SEQUENCE [LARGE SCALE GENOMIC DNA]</scope>
    <source>
        <strain>168</strain>
    </source>
</reference>
<reference key="4">
    <citation type="journal article" date="2009" name="Microbiology">
        <title>From a consortium sequence to a unified sequence: the Bacillus subtilis 168 reference genome a decade later.</title>
        <authorList>
            <person name="Barbe V."/>
            <person name="Cruveiller S."/>
            <person name="Kunst F."/>
            <person name="Lenoble P."/>
            <person name="Meurice G."/>
            <person name="Sekowska A."/>
            <person name="Vallenet D."/>
            <person name="Wang T."/>
            <person name="Moszer I."/>
            <person name="Medigue C."/>
            <person name="Danchin A."/>
        </authorList>
    </citation>
    <scope>SEQUENCE REVISION TO 292</scope>
</reference>
<protein>
    <recommendedName>
        <fullName>Putative isomerase YraM</fullName>
        <ecNumber>5.-.-.-</ecNumber>
    </recommendedName>
</protein>
<name>YRAM_BACSU</name>
<accession>O07931</accession>
<keyword id="KW-0413">Isomerase</keyword>
<keyword id="KW-1185">Reference proteome</keyword>
<feature type="chain" id="PRO_0000049858" description="Putative isomerase YraM">
    <location>
        <begin position="1"/>
        <end position="367"/>
    </location>
</feature>
<feature type="sequence conflict" description="In Ref. 1; CAA63456 and 2; AAB80883." evidence="1" ref="1 2">
    <original>P</original>
    <variation>S</variation>
    <location>
        <position position="292"/>
    </location>
</feature>
<organism>
    <name type="scientific">Bacillus subtilis (strain 168)</name>
    <dbReference type="NCBI Taxonomy" id="224308"/>
    <lineage>
        <taxon>Bacteria</taxon>
        <taxon>Bacillati</taxon>
        <taxon>Bacillota</taxon>
        <taxon>Bacilli</taxon>
        <taxon>Bacillales</taxon>
        <taxon>Bacillaceae</taxon>
        <taxon>Bacillus</taxon>
    </lineage>
</organism>
<sequence>MVKTNVTIMRGGTSKGVFFHESAMPNNKNEWEPFLLDVMGSPDKRQIDGLGGGNSLTSKVAIIKKAYTSDIDVHYTFGQVSISEEKVDFKGNCGNISAAVGPFAIEEGLVKAKEPMTAVRILNTNTNKMIIAEVEVEDGQVKYDGDVTISGVPGSGSPIYLNFHDAAGSVTGHLLPTGNSSEFLDTSQGQIEVSIIDYANPLVFVEASSIGLDGTELAEEFTDLQLAQFEELRSIAAEKCGFASRFSATKLSPAVPKLAIVAKPEKYKDSTGAWHSSVEMDLHIRMMSMQKPHQALAVTGAICTTRALSVEGAIPARIAKNHSTKVRLAHSSGIIETMVEPTGIKIVRTARRIMDGTVYTHGDYQMM</sequence>
<comment type="similarity">
    <text evidence="1">Belongs to the PrpF family.</text>
</comment>
<evidence type="ECO:0000305" key="1"/>
<dbReference type="EC" id="5.-.-.-"/>
<dbReference type="EMBL" id="X92868">
    <property type="protein sequence ID" value="CAA63456.1"/>
    <property type="molecule type" value="Genomic_DNA"/>
</dbReference>
<dbReference type="EMBL" id="U93875">
    <property type="protein sequence ID" value="AAB80883.1"/>
    <property type="molecule type" value="Genomic_DNA"/>
</dbReference>
<dbReference type="EMBL" id="AL009126">
    <property type="protein sequence ID" value="CAB14629.2"/>
    <property type="molecule type" value="Genomic_DNA"/>
</dbReference>
<dbReference type="PIR" id="E69971">
    <property type="entry name" value="E69971"/>
</dbReference>
<dbReference type="RefSeq" id="WP_009967865.1">
    <property type="nucleotide sequence ID" value="NZ_OZ025638.1"/>
</dbReference>
<dbReference type="SMR" id="O07931"/>
<dbReference type="FunCoup" id="O07931">
    <property type="interactions" value="111"/>
</dbReference>
<dbReference type="STRING" id="224308.BSU26880"/>
<dbReference type="PaxDb" id="224308-BSU26880"/>
<dbReference type="EnsemblBacteria" id="CAB14629">
    <property type="protein sequence ID" value="CAB14629"/>
    <property type="gene ID" value="BSU_26880"/>
</dbReference>
<dbReference type="GeneID" id="936343"/>
<dbReference type="KEGG" id="bsu:BSU26880"/>
<dbReference type="PATRIC" id="fig|224308.179.peg.2920"/>
<dbReference type="eggNOG" id="COG2828">
    <property type="taxonomic scope" value="Bacteria"/>
</dbReference>
<dbReference type="InParanoid" id="O07931"/>
<dbReference type="OrthoDB" id="9779763at2"/>
<dbReference type="PhylomeDB" id="O07931"/>
<dbReference type="BioCyc" id="BSUB:BSU26880-MONOMER"/>
<dbReference type="Proteomes" id="UP000001570">
    <property type="component" value="Chromosome"/>
</dbReference>
<dbReference type="GO" id="GO:0016853">
    <property type="term" value="F:isomerase activity"/>
    <property type="evidence" value="ECO:0007669"/>
    <property type="project" value="UniProtKB-KW"/>
</dbReference>
<dbReference type="Gene3D" id="3.10.310.10">
    <property type="entry name" value="Diaminopimelate Epimerase, Chain A, domain 1"/>
    <property type="match status" value="2"/>
</dbReference>
<dbReference type="InterPro" id="IPR007400">
    <property type="entry name" value="PrpF-like"/>
</dbReference>
<dbReference type="PANTHER" id="PTHR43709">
    <property type="entry name" value="ACONITATE ISOMERASE-RELATED"/>
    <property type="match status" value="1"/>
</dbReference>
<dbReference type="PANTHER" id="PTHR43709:SF2">
    <property type="entry name" value="DUF453 DOMAIN PROTEIN (AFU_ORTHOLOGUE AFUA_6G00360)"/>
    <property type="match status" value="1"/>
</dbReference>
<dbReference type="Pfam" id="PF04303">
    <property type="entry name" value="PrpF"/>
    <property type="match status" value="1"/>
</dbReference>
<dbReference type="SUPFAM" id="SSF54506">
    <property type="entry name" value="Diaminopimelate epimerase-like"/>
    <property type="match status" value="2"/>
</dbReference>
<gene>
    <name type="primary">yraM</name>
    <name type="ordered locus">BSU26880</name>
</gene>